<reference key="1">
    <citation type="journal article" date="2006" name="Science">
        <title>The genome of black cottonwood, Populus trichocarpa (Torr. &amp; Gray).</title>
        <authorList>
            <person name="Tuskan G.A."/>
            <person name="Difazio S."/>
            <person name="Jansson S."/>
            <person name="Bohlmann J."/>
            <person name="Grigoriev I."/>
            <person name="Hellsten U."/>
            <person name="Putnam N."/>
            <person name="Ralph S."/>
            <person name="Rombauts S."/>
            <person name="Salamov A."/>
            <person name="Schein J."/>
            <person name="Sterck L."/>
            <person name="Aerts A."/>
            <person name="Bhalerao R.R."/>
            <person name="Bhalerao R.P."/>
            <person name="Blaudez D."/>
            <person name="Boerjan W."/>
            <person name="Brun A."/>
            <person name="Brunner A."/>
            <person name="Busov V."/>
            <person name="Campbell M."/>
            <person name="Carlson J."/>
            <person name="Chalot M."/>
            <person name="Chapman J."/>
            <person name="Chen G.-L."/>
            <person name="Cooper D."/>
            <person name="Coutinho P.M."/>
            <person name="Couturier J."/>
            <person name="Covert S."/>
            <person name="Cronk Q."/>
            <person name="Cunningham R."/>
            <person name="Davis J."/>
            <person name="Degroeve S."/>
            <person name="Dejardin A."/>
            <person name="dePamphilis C.W."/>
            <person name="Detter J."/>
            <person name="Dirks B."/>
            <person name="Dubchak I."/>
            <person name="Duplessis S."/>
            <person name="Ehlting J."/>
            <person name="Ellis B."/>
            <person name="Gendler K."/>
            <person name="Goodstein D."/>
            <person name="Gribskov M."/>
            <person name="Grimwood J."/>
            <person name="Groover A."/>
            <person name="Gunter L."/>
            <person name="Hamberger B."/>
            <person name="Heinze B."/>
            <person name="Helariutta Y."/>
            <person name="Henrissat B."/>
            <person name="Holligan D."/>
            <person name="Holt R."/>
            <person name="Huang W."/>
            <person name="Islam-Faridi N."/>
            <person name="Jones S."/>
            <person name="Jones-Rhoades M."/>
            <person name="Jorgensen R."/>
            <person name="Joshi C."/>
            <person name="Kangasjaervi J."/>
            <person name="Karlsson J."/>
            <person name="Kelleher C."/>
            <person name="Kirkpatrick R."/>
            <person name="Kirst M."/>
            <person name="Kohler A."/>
            <person name="Kalluri U."/>
            <person name="Larimer F."/>
            <person name="Leebens-Mack J."/>
            <person name="Leple J.-C."/>
            <person name="Locascio P."/>
            <person name="Lou Y."/>
            <person name="Lucas S."/>
            <person name="Martin F."/>
            <person name="Montanini B."/>
            <person name="Napoli C."/>
            <person name="Nelson D.R."/>
            <person name="Nelson C."/>
            <person name="Nieminen K."/>
            <person name="Nilsson O."/>
            <person name="Pereda V."/>
            <person name="Peter G."/>
            <person name="Philippe R."/>
            <person name="Pilate G."/>
            <person name="Poliakov A."/>
            <person name="Razumovskaya J."/>
            <person name="Richardson P."/>
            <person name="Rinaldi C."/>
            <person name="Ritland K."/>
            <person name="Rouze P."/>
            <person name="Ryaboy D."/>
            <person name="Schmutz J."/>
            <person name="Schrader J."/>
            <person name="Segerman B."/>
            <person name="Shin H."/>
            <person name="Siddiqui A."/>
            <person name="Sterky F."/>
            <person name="Terry A."/>
            <person name="Tsai C.-J."/>
            <person name="Uberbacher E."/>
            <person name="Unneberg P."/>
            <person name="Vahala J."/>
            <person name="Wall K."/>
            <person name="Wessler S."/>
            <person name="Yang G."/>
            <person name="Yin T."/>
            <person name="Douglas C."/>
            <person name="Marra M."/>
            <person name="Sandberg G."/>
            <person name="Van de Peer Y."/>
            <person name="Rokhsar D.S."/>
        </authorList>
    </citation>
    <scope>NUCLEOTIDE SEQUENCE [LARGE SCALE GENOMIC DNA]</scope>
    <source>
        <strain>cv. Nisqually</strain>
    </source>
</reference>
<comment type="function">
    <text evidence="1">One of the components of the core complex of photosystem II (PSII). PSII is a light-driven water:plastoquinone oxidoreductase that uses light energy to abstract electrons from H(2)O, generating O(2) and a proton gradient subsequently used for ATP formation. It consists of a core antenna complex that captures photons, and an electron transfer chain that converts photonic excitation into a charge separation. This subunit is found at the monomer-monomer interface.</text>
</comment>
<comment type="subunit">
    <text evidence="1">PSII is composed of 1 copy each of membrane proteins PsbA, PsbB, PsbC, PsbD, PsbE, PsbF, PsbH, PsbI, PsbJ, PsbK, PsbL, PsbM, PsbT, PsbX, PsbY, PsbZ, Psb30/Ycf12, at least 3 peripheral proteins of the oxygen-evolving complex and a large number of cofactors. It forms dimeric complexes.</text>
</comment>
<comment type="subcellular location">
    <subcellularLocation>
        <location evidence="1">Plastid</location>
        <location evidence="1">Chloroplast thylakoid membrane</location>
        <topology evidence="1">Single-pass membrane protein</topology>
    </subcellularLocation>
</comment>
<comment type="similarity">
    <text evidence="1">Belongs to the PsbM family.</text>
</comment>
<gene>
    <name evidence="1" type="primary">psbM</name>
    <name type="ordered locus">Poptr_cp014</name>
</gene>
<protein>
    <recommendedName>
        <fullName evidence="1">Photosystem II reaction center protein M</fullName>
        <shortName evidence="1">PSII-M</shortName>
    </recommendedName>
</protein>
<proteinExistence type="inferred from homology"/>
<organism>
    <name type="scientific">Populus trichocarpa</name>
    <name type="common">Western balsam poplar</name>
    <name type="synonym">Populus balsamifera subsp. trichocarpa</name>
    <dbReference type="NCBI Taxonomy" id="3694"/>
    <lineage>
        <taxon>Eukaryota</taxon>
        <taxon>Viridiplantae</taxon>
        <taxon>Streptophyta</taxon>
        <taxon>Embryophyta</taxon>
        <taxon>Tracheophyta</taxon>
        <taxon>Spermatophyta</taxon>
        <taxon>Magnoliopsida</taxon>
        <taxon>eudicotyledons</taxon>
        <taxon>Gunneridae</taxon>
        <taxon>Pentapetalae</taxon>
        <taxon>rosids</taxon>
        <taxon>fabids</taxon>
        <taxon>Malpighiales</taxon>
        <taxon>Salicaceae</taxon>
        <taxon>Saliceae</taxon>
        <taxon>Populus</taxon>
    </lineage>
</organism>
<dbReference type="EMBL" id="EF489041">
    <property type="protein sequence ID" value="ABO36696.1"/>
    <property type="molecule type" value="Genomic_DNA"/>
</dbReference>
<dbReference type="RefSeq" id="YP_001109493.1">
    <property type="nucleotide sequence ID" value="NC_009143.1"/>
</dbReference>
<dbReference type="SMR" id="A4GYQ2"/>
<dbReference type="FunCoup" id="A4GYQ2">
    <property type="interactions" value="34"/>
</dbReference>
<dbReference type="STRING" id="3694.A4GYQ2"/>
<dbReference type="EnsemblPlants" id="Potri.013G142100.1.v4.1">
    <property type="protein sequence ID" value="Potri.013G142100.1.v4.1"/>
    <property type="gene ID" value="Potri.013G142100.v4.1"/>
</dbReference>
<dbReference type="GeneID" id="4929648"/>
<dbReference type="Gramene" id="Potri.013G142100.1.v4.1">
    <property type="protein sequence ID" value="Potri.013G142100.1.v4.1"/>
    <property type="gene ID" value="Potri.013G142100.v4.1"/>
</dbReference>
<dbReference type="KEGG" id="pop:4929648"/>
<dbReference type="InParanoid" id="A4GYQ2"/>
<dbReference type="OrthoDB" id="564131at2759"/>
<dbReference type="Proteomes" id="UP000006729">
    <property type="component" value="Chloroplast"/>
</dbReference>
<dbReference type="ExpressionAtlas" id="A4GYQ2">
    <property type="expression patterns" value="baseline and differential"/>
</dbReference>
<dbReference type="GO" id="GO:0009535">
    <property type="term" value="C:chloroplast thylakoid membrane"/>
    <property type="evidence" value="ECO:0007669"/>
    <property type="project" value="UniProtKB-SubCell"/>
</dbReference>
<dbReference type="GO" id="GO:0009523">
    <property type="term" value="C:photosystem II"/>
    <property type="evidence" value="ECO:0007669"/>
    <property type="project" value="UniProtKB-KW"/>
</dbReference>
<dbReference type="GO" id="GO:0019684">
    <property type="term" value="P:photosynthesis, light reaction"/>
    <property type="evidence" value="ECO:0007669"/>
    <property type="project" value="InterPro"/>
</dbReference>
<dbReference type="HAMAP" id="MF_00438">
    <property type="entry name" value="PSII_PsbM"/>
    <property type="match status" value="1"/>
</dbReference>
<dbReference type="InterPro" id="IPR007826">
    <property type="entry name" value="PSII_PsbM"/>
</dbReference>
<dbReference type="InterPro" id="IPR037269">
    <property type="entry name" value="PSII_PsbM_sf"/>
</dbReference>
<dbReference type="NCBIfam" id="TIGR03038">
    <property type="entry name" value="PS_II_psbM"/>
    <property type="match status" value="1"/>
</dbReference>
<dbReference type="PANTHER" id="PTHR35774">
    <property type="entry name" value="PHOTOSYSTEM II REACTION CENTER PROTEIN M"/>
    <property type="match status" value="1"/>
</dbReference>
<dbReference type="PANTHER" id="PTHR35774:SF1">
    <property type="entry name" value="PHOTOSYSTEM II REACTION CENTER PROTEIN M"/>
    <property type="match status" value="1"/>
</dbReference>
<dbReference type="Pfam" id="PF05151">
    <property type="entry name" value="PsbM"/>
    <property type="match status" value="1"/>
</dbReference>
<dbReference type="SUPFAM" id="SSF161033">
    <property type="entry name" value="Photosystem II reaction center protein M, PsbM"/>
    <property type="match status" value="1"/>
</dbReference>
<feature type="chain" id="PRO_0000325748" description="Photosystem II reaction center protein M">
    <location>
        <begin position="1"/>
        <end position="34"/>
    </location>
</feature>
<feature type="transmembrane region" description="Helical" evidence="1">
    <location>
        <begin position="5"/>
        <end position="25"/>
    </location>
</feature>
<name>PSBM_POPTR</name>
<keyword id="KW-0150">Chloroplast</keyword>
<keyword id="KW-0472">Membrane</keyword>
<keyword id="KW-0602">Photosynthesis</keyword>
<keyword id="KW-0604">Photosystem II</keyword>
<keyword id="KW-0934">Plastid</keyword>
<keyword id="KW-0674">Reaction center</keyword>
<keyword id="KW-1185">Reference proteome</keyword>
<keyword id="KW-0793">Thylakoid</keyword>
<keyword id="KW-0812">Transmembrane</keyword>
<keyword id="KW-1133">Transmembrane helix</keyword>
<accession>A4GYQ2</accession>
<evidence type="ECO:0000255" key="1">
    <source>
        <dbReference type="HAMAP-Rule" id="MF_00438"/>
    </source>
</evidence>
<sequence>MEVNILAFIATALFILVPTAFLLIIYVKTVSQSD</sequence>
<geneLocation type="chloroplast"/>